<organism>
    <name type="scientific">Olea europaea</name>
    <name type="common">Common olive</name>
    <dbReference type="NCBI Taxonomy" id="4146"/>
    <lineage>
        <taxon>Eukaryota</taxon>
        <taxon>Viridiplantae</taxon>
        <taxon>Streptophyta</taxon>
        <taxon>Embryophyta</taxon>
        <taxon>Tracheophyta</taxon>
        <taxon>Spermatophyta</taxon>
        <taxon>Magnoliopsida</taxon>
        <taxon>eudicotyledons</taxon>
        <taxon>Gunneridae</taxon>
        <taxon>Pentapetalae</taxon>
        <taxon>asterids</taxon>
        <taxon>lamiids</taxon>
        <taxon>Lamiales</taxon>
        <taxon>Oleaceae</taxon>
        <taxon>Oleeae</taxon>
        <taxon>Olea</taxon>
    </lineage>
</organism>
<feature type="initiator methionine" description="Removed" evidence="1">
    <location>
        <position position="1"/>
    </location>
</feature>
<feature type="chain" id="PRO_0000424983" description="Profilin-3">
    <location>
        <begin position="2"/>
        <end position="134"/>
    </location>
</feature>
<feature type="short sequence motif" description="Involved in PIP2 interaction">
    <location>
        <begin position="84"/>
        <end position="100"/>
    </location>
</feature>
<feature type="modified residue" description="Phosphothreonine" evidence="1">
    <location>
        <position position="114"/>
    </location>
</feature>
<feature type="disulfide bond" evidence="3">
    <location>
        <begin position="13"/>
        <end position="118"/>
    </location>
</feature>
<protein>
    <recommendedName>
        <fullName>Profilin-3</fullName>
    </recommendedName>
    <alternativeName>
        <fullName>Pollen allergen Ole e 2</fullName>
    </alternativeName>
    <allergenName>Ole e 2</allergenName>
</protein>
<comment type="function">
    <text evidence="1">Binds to actin and affects the structure of the cytoskeleton. At high concentrations, profilin prevents the polymerization of actin, whereas it enhances it at low concentrations (By similarity).</text>
</comment>
<comment type="subunit">
    <text evidence="1">Occurs in many kinds of cells as a complex with monomeric actin in a 1:1 ratio.</text>
</comment>
<comment type="subcellular location">
    <subcellularLocation>
        <location evidence="1">Cytoplasm</location>
        <location evidence="1">Cytoskeleton</location>
    </subcellularLocation>
</comment>
<comment type="PTM">
    <text evidence="1">Phosphorylated by MAP kinases.</text>
</comment>
<comment type="polymorphism">
    <text>Several isoforms of the allergen exist due to polymorphism.</text>
</comment>
<comment type="allergen">
    <text>Causes an allergic reaction in human.</text>
</comment>
<comment type="miscellaneous">
    <text evidence="3">The variability of the residues taking part of IgE-binding epitopes might be responsible of the difference in cross-reactivity among olive pollen cultivars, and between distantly related pollen species, leading to a variable range of allergy reactions among atopic patients.</text>
</comment>
<comment type="similarity">
    <text evidence="2">Belongs to the profilin family.</text>
</comment>
<accession>P0DKE0</accession>
<accession>A4GCS1</accession>
<sequence>MSWQAYVDDHLMCDIEGHEGHRLTAAAIVGQDGSVWAQSATFPQFKPEEMNGIMTDFNEPGHLAPTGLHLGGTKYMVIQGEAGAVIRGKKGSGGITIKKTGQALVFGIYEEPVTPGQCNMVVERLGDYLLEQGL</sequence>
<reference key="1">
    <citation type="journal article" date="2012" name="PLoS ONE">
        <title>Characterization of profilin polymorphism in pollen with a focus on multifunctionality.</title>
        <authorList>
            <person name="Jimenez-Lopez J.C."/>
            <person name="Morales S."/>
            <person name="Castro A.J."/>
            <person name="Volkmann D."/>
            <person name="Rodriguez-Garcia M.I."/>
            <person name="Alche Jde D."/>
        </authorList>
    </citation>
    <scope>NUCLEOTIDE SEQUENCE [MRNA]</scope>
    <scope>POLYMORPHISM</scope>
    <source>
        <strain>cv. Hojiblanca</strain>
        <tissue>Pollen</tissue>
    </source>
</reference>
<reference key="2">
    <citation type="journal article" date="2013" name="PLoS ONE">
        <title>Analysis of the effects of polymorphism on pollen profilin structural functionality and the generation of conformational, T- and B-cell epitopes.</title>
        <authorList>
            <person name="Jimenez-Lopez J.C."/>
            <person name="Rodriguez-Garcia M.I."/>
            <person name="Alche J.D."/>
        </authorList>
    </citation>
    <scope>3D-STRUCTURE MODELING</scope>
    <scope>DISULFIDE BOND</scope>
</reference>
<dbReference type="EMBL" id="DQ061982">
    <property type="protein sequence ID" value="AAZ08570.1"/>
    <property type="molecule type" value="mRNA"/>
</dbReference>
<dbReference type="SMR" id="P0DKE0"/>
<dbReference type="GO" id="GO:0005938">
    <property type="term" value="C:cell cortex"/>
    <property type="evidence" value="ECO:0007669"/>
    <property type="project" value="TreeGrafter"/>
</dbReference>
<dbReference type="GO" id="GO:0005856">
    <property type="term" value="C:cytoskeleton"/>
    <property type="evidence" value="ECO:0007669"/>
    <property type="project" value="UniProtKB-SubCell"/>
</dbReference>
<dbReference type="GO" id="GO:0003785">
    <property type="term" value="F:actin monomer binding"/>
    <property type="evidence" value="ECO:0007669"/>
    <property type="project" value="TreeGrafter"/>
</dbReference>
<dbReference type="CDD" id="cd00148">
    <property type="entry name" value="PROF"/>
    <property type="match status" value="1"/>
</dbReference>
<dbReference type="FunFam" id="3.30.450.30:FF:000001">
    <property type="entry name" value="Profilin"/>
    <property type="match status" value="1"/>
</dbReference>
<dbReference type="Gene3D" id="3.30.450.30">
    <property type="entry name" value="Dynein light chain 2a, cytoplasmic"/>
    <property type="match status" value="1"/>
</dbReference>
<dbReference type="InterPro" id="IPR048278">
    <property type="entry name" value="PFN"/>
</dbReference>
<dbReference type="InterPro" id="IPR005455">
    <property type="entry name" value="PFN_euk"/>
</dbReference>
<dbReference type="InterPro" id="IPR036140">
    <property type="entry name" value="PFN_sf"/>
</dbReference>
<dbReference type="InterPro" id="IPR027310">
    <property type="entry name" value="Profilin_CS"/>
</dbReference>
<dbReference type="PANTHER" id="PTHR11604">
    <property type="entry name" value="PROFILIN"/>
    <property type="match status" value="1"/>
</dbReference>
<dbReference type="PANTHER" id="PTHR11604:SF25">
    <property type="entry name" value="PROFILIN-5"/>
    <property type="match status" value="1"/>
</dbReference>
<dbReference type="Pfam" id="PF00235">
    <property type="entry name" value="Profilin"/>
    <property type="match status" value="1"/>
</dbReference>
<dbReference type="PRINTS" id="PR00392">
    <property type="entry name" value="PROFILIN"/>
</dbReference>
<dbReference type="PRINTS" id="PR01640">
    <property type="entry name" value="PROFILINPLNT"/>
</dbReference>
<dbReference type="SMART" id="SM00392">
    <property type="entry name" value="PROF"/>
    <property type="match status" value="1"/>
</dbReference>
<dbReference type="SUPFAM" id="SSF55770">
    <property type="entry name" value="Profilin (actin-binding protein)"/>
    <property type="match status" value="1"/>
</dbReference>
<dbReference type="PROSITE" id="PS00414">
    <property type="entry name" value="PROFILIN"/>
    <property type="match status" value="1"/>
</dbReference>
<evidence type="ECO:0000250" key="1"/>
<evidence type="ECO:0000305" key="2"/>
<evidence type="ECO:0000305" key="3">
    <source>
    </source>
</evidence>
<keyword id="KW-0009">Actin-binding</keyword>
<keyword id="KW-0020">Allergen</keyword>
<keyword id="KW-0963">Cytoplasm</keyword>
<keyword id="KW-0206">Cytoskeleton</keyword>
<keyword id="KW-1015">Disulfide bond</keyword>
<keyword id="KW-0597">Phosphoprotein</keyword>
<proteinExistence type="evidence at protein level"/>
<name>PROFR_OLEEU</name>